<reference key="1">
    <citation type="journal article" date="2005" name="J. Hered.">
        <title>Characterization of candidate genes for neuronal ceroid lipofuscinosis in dog.</title>
        <authorList>
            <person name="Drogemuller C."/>
            <person name="Wohlke A."/>
            <person name="Distl O."/>
        </authorList>
    </citation>
    <scope>NUCLEOTIDE SEQUENCE [MRNA]</scope>
</reference>
<reference key="2">
    <citation type="journal article" date="2005" name="Genomics">
        <title>A mutation in canine CLN5 causes neuronal ceroid lipofuscinosis in Border collie dogs.</title>
        <authorList>
            <person name="Melville S.A."/>
            <person name="Wilson C.L."/>
            <person name="Chiang C.S."/>
            <person name="Studdert V.P."/>
            <person name="Lingaas F."/>
            <person name="Wilton A.N."/>
        </authorList>
    </citation>
    <scope>NUCLEOTIDE SEQUENCE [GENOMIC DNA] OF 51-350</scope>
    <scope>INVOLVEMENT IN NCL</scope>
</reference>
<gene>
    <name type="primary">CLN5</name>
    <name evidence="1" type="synonym">BMPS</name>
</gene>
<name>CLN5_CANLF</name>
<dbReference type="EC" id="2.3.1.-" evidence="1"/>
<dbReference type="EC" id="3.1.2.22" evidence="1"/>
<dbReference type="EMBL" id="AJ875417">
    <property type="protein sequence ID" value="CAI44938.1"/>
    <property type="molecule type" value="mRNA"/>
</dbReference>
<dbReference type="EMBL" id="AH014663">
    <property type="protein sequence ID" value="AAX10107.1"/>
    <property type="molecule type" value="Genomic_DNA"/>
</dbReference>
<dbReference type="RefSeq" id="NP_001011556.1">
    <property type="nucleotide sequence ID" value="NM_001011556.1"/>
</dbReference>
<dbReference type="SMR" id="Q5JZQ9"/>
<dbReference type="FunCoup" id="Q5JZQ9">
    <property type="interactions" value="229"/>
</dbReference>
<dbReference type="STRING" id="9615.ENSCAFP00000007554"/>
<dbReference type="GlyCosmos" id="Q5JZQ9">
    <property type="glycosylation" value="8 sites, No reported glycans"/>
</dbReference>
<dbReference type="PaxDb" id="9612-ENSCAFP00000007554"/>
<dbReference type="Ensembl" id="ENSCAFT00000008156.5">
    <property type="protein sequence ID" value="ENSCAFP00000007554.3"/>
    <property type="gene ID" value="ENSCAFG00000005071.5"/>
</dbReference>
<dbReference type="Ensembl" id="ENSCAFT00030014466.1">
    <property type="protein sequence ID" value="ENSCAFP00030012616.1"/>
    <property type="gene ID" value="ENSCAFG00030007821.1"/>
</dbReference>
<dbReference type="Ensembl" id="ENSCAFT00040016641.1">
    <property type="protein sequence ID" value="ENSCAFP00040014421.1"/>
    <property type="gene ID" value="ENSCAFG00040008928.1"/>
</dbReference>
<dbReference type="Ensembl" id="ENSCAFT00845046325.1">
    <property type="protein sequence ID" value="ENSCAFP00845036378.1"/>
    <property type="gene ID" value="ENSCAFG00845026181.1"/>
</dbReference>
<dbReference type="GeneID" id="485498"/>
<dbReference type="KEGG" id="cfa:485498"/>
<dbReference type="CTD" id="1203"/>
<dbReference type="VEuPathDB" id="HostDB:ENSCAFG00845026181"/>
<dbReference type="VGNC" id="VGNC:111413">
    <property type="gene designation" value="CLN5"/>
</dbReference>
<dbReference type="eggNOG" id="ENOG502QPQ5">
    <property type="taxonomic scope" value="Eukaryota"/>
</dbReference>
<dbReference type="GeneTree" id="ENSGT00390000010065"/>
<dbReference type="HOGENOM" id="CLU_050387_0_0_1"/>
<dbReference type="InParanoid" id="Q5JZQ9"/>
<dbReference type="OMA" id="FRPHQSF"/>
<dbReference type="OrthoDB" id="10005881at2759"/>
<dbReference type="TreeFam" id="TF330864"/>
<dbReference type="Proteomes" id="UP000002254">
    <property type="component" value="Chromosome 22"/>
</dbReference>
<dbReference type="Proteomes" id="UP000694429">
    <property type="component" value="Chromosome 22"/>
</dbReference>
<dbReference type="Proteomes" id="UP000694542">
    <property type="component" value="Chromosome 22"/>
</dbReference>
<dbReference type="Proteomes" id="UP000805418">
    <property type="component" value="Chromosome 22"/>
</dbReference>
<dbReference type="Bgee" id="ENSCAFG00000005071">
    <property type="expression patterns" value="Expressed in saliva-secreting gland and 49 other cell types or tissues"/>
</dbReference>
<dbReference type="GO" id="GO:0005829">
    <property type="term" value="C:cytosol"/>
    <property type="evidence" value="ECO:0007669"/>
    <property type="project" value="GOC"/>
</dbReference>
<dbReference type="GO" id="GO:0005783">
    <property type="term" value="C:endoplasmic reticulum"/>
    <property type="evidence" value="ECO:0000250"/>
    <property type="project" value="UniProtKB"/>
</dbReference>
<dbReference type="GO" id="GO:0005794">
    <property type="term" value="C:Golgi apparatus"/>
    <property type="evidence" value="ECO:0000250"/>
    <property type="project" value="UniProtKB"/>
</dbReference>
<dbReference type="GO" id="GO:0005765">
    <property type="term" value="C:lysosomal membrane"/>
    <property type="evidence" value="ECO:0000250"/>
    <property type="project" value="UniProtKB"/>
</dbReference>
<dbReference type="GO" id="GO:0005764">
    <property type="term" value="C:lysosome"/>
    <property type="evidence" value="ECO:0000250"/>
    <property type="project" value="UniProtKB"/>
</dbReference>
<dbReference type="GO" id="GO:0016020">
    <property type="term" value="C:membrane"/>
    <property type="evidence" value="ECO:0000250"/>
    <property type="project" value="UniProtKB"/>
</dbReference>
<dbReference type="GO" id="GO:0048471">
    <property type="term" value="C:perinuclear region of cytoplasm"/>
    <property type="evidence" value="ECO:0000250"/>
    <property type="project" value="UniProtKB"/>
</dbReference>
<dbReference type="GO" id="GO:0005775">
    <property type="term" value="C:vacuolar lumen"/>
    <property type="evidence" value="ECO:0007669"/>
    <property type="project" value="Ensembl"/>
</dbReference>
<dbReference type="GO" id="GO:0160121">
    <property type="term" value="F:bis(monoacylglycero)phosphate synthase activity"/>
    <property type="evidence" value="ECO:0000250"/>
    <property type="project" value="UniProtKB"/>
</dbReference>
<dbReference type="GO" id="GO:0005537">
    <property type="term" value="F:D-mannose binding"/>
    <property type="evidence" value="ECO:0000250"/>
    <property type="project" value="UniProtKB"/>
</dbReference>
<dbReference type="GO" id="GO:0016798">
    <property type="term" value="F:hydrolase activity, acting on glycosyl bonds"/>
    <property type="evidence" value="ECO:0000318"/>
    <property type="project" value="GO_Central"/>
</dbReference>
<dbReference type="GO" id="GO:0052816">
    <property type="term" value="F:long-chain fatty acyl-CoA hydrolase activity"/>
    <property type="evidence" value="ECO:0000250"/>
    <property type="project" value="UniProtKB"/>
</dbReference>
<dbReference type="GO" id="GO:0007420">
    <property type="term" value="P:brain development"/>
    <property type="evidence" value="ECO:0000250"/>
    <property type="project" value="UniProtKB"/>
</dbReference>
<dbReference type="GO" id="GO:0070085">
    <property type="term" value="P:glycosylation"/>
    <property type="evidence" value="ECO:0000250"/>
    <property type="project" value="UniProtKB"/>
</dbReference>
<dbReference type="GO" id="GO:0007042">
    <property type="term" value="P:lysosomal lumen acidification"/>
    <property type="evidence" value="ECO:0000250"/>
    <property type="project" value="UniProtKB"/>
</dbReference>
<dbReference type="GO" id="GO:0007040">
    <property type="term" value="P:lysosome organization"/>
    <property type="evidence" value="ECO:0000318"/>
    <property type="project" value="GO_Central"/>
</dbReference>
<dbReference type="GO" id="GO:0022008">
    <property type="term" value="P:neurogenesis"/>
    <property type="evidence" value="ECO:0000250"/>
    <property type="project" value="UniProtKB"/>
</dbReference>
<dbReference type="GO" id="GO:1904426">
    <property type="term" value="P:positive regulation of GTP binding"/>
    <property type="evidence" value="ECO:0000250"/>
    <property type="project" value="UniProtKB"/>
</dbReference>
<dbReference type="GO" id="GO:0042147">
    <property type="term" value="P:retrograde transport, endosome to Golgi"/>
    <property type="evidence" value="ECO:0000250"/>
    <property type="project" value="UniProtKB"/>
</dbReference>
<dbReference type="GO" id="GO:0006465">
    <property type="term" value="P:signal peptide processing"/>
    <property type="evidence" value="ECO:0000250"/>
    <property type="project" value="UniProtKB"/>
</dbReference>
<dbReference type="GO" id="GO:0007601">
    <property type="term" value="P:visual perception"/>
    <property type="evidence" value="ECO:0007669"/>
    <property type="project" value="Ensembl"/>
</dbReference>
<dbReference type="InterPro" id="IPR026138">
    <property type="entry name" value="CLN5"/>
</dbReference>
<dbReference type="PANTHER" id="PTHR15380:SF2">
    <property type="entry name" value="CEROID-LIPOFUSCINOSIS NEURONAL PROTEIN 5"/>
    <property type="match status" value="1"/>
</dbReference>
<dbReference type="PANTHER" id="PTHR15380">
    <property type="entry name" value="CEROID-LIPOFUSCINOSIS, NEURONAL 5"/>
    <property type="match status" value="1"/>
</dbReference>
<dbReference type="Pfam" id="PF15014">
    <property type="entry name" value="CLN5"/>
    <property type="match status" value="1"/>
</dbReference>
<keyword id="KW-1015">Disulfide bond</keyword>
<keyword id="KW-0325">Glycoprotein</keyword>
<keyword id="KW-0378">Hydrolase</keyword>
<keyword id="KW-0458">Lysosome</keyword>
<keyword id="KW-0472">Membrane</keyword>
<keyword id="KW-0523">Neurodegeneration</keyword>
<keyword id="KW-0525">Neuronal ceroid lipofuscinosis</keyword>
<keyword id="KW-1185">Reference proteome</keyword>
<keyword id="KW-0735">Signal-anchor</keyword>
<keyword id="KW-0808">Transferase</keyword>
<keyword id="KW-0812">Transmembrane</keyword>
<keyword id="KW-1133">Transmembrane helix</keyword>
<evidence type="ECO:0000250" key="1">
    <source>
        <dbReference type="UniProtKB" id="O75503"/>
    </source>
</evidence>
<evidence type="ECO:0000250" key="2">
    <source>
        <dbReference type="UniProtKB" id="Q3UMW8"/>
    </source>
</evidence>
<evidence type="ECO:0000255" key="3"/>
<evidence type="ECO:0000305" key="4"/>
<proteinExistence type="evidence at transcript level"/>
<sequence>MAQAGSADPGVGGHWAAGPRCAPWRWALALLWLATAAGGPSRRQWPVPYKRFSFRPEPDPYCQAKYTFCPTGSPIPVMKGDDVIEVFRLQTPVWEFKYGNLLGHLKIMHDAIGFKSTLTGKNYTMEWYELFQLGNCTFPHLRPEMNAPFWCNQGAACFFEGIDDIHWKENGTLVLVATISGNTFNQMAKWVKRDNETGIYYETWTVQASPTKGAETWFESYDCSKFVLRTYKKLAELGAEFKKIETNYTRIFLYSGEPTYLGNETSIFGPTGNKTLALAIKRFYYPFKPHLSTKEFLLSILQIFDAVIIHREFYLFYNFEYWFLPMKFPFIKITYEEIPLPKRNETLSGL</sequence>
<comment type="function">
    <molecule>Bis(monoacylglycero)phosphate synthase CLN5, secreted form</molecule>
    <text evidence="1">Catalyzes the synthesis of bis(monoacylglycero)phosphate (BMP) via transacylation of 2 molecules of lysophosphatidylglycerol (LPG). BMP also known as lysobisphosphatidic acid plays a key role in the formation of intraluminal vesicles and in maintaining intracellular cholesterol homeostasis. Can use only LPG as the exclusive lysophospholipid acyl donor for base exchange and displays BMP synthase activity towards various LPGs (LPG 14:0, LPG 16:0, LPG 18:0, LPG 18:1) with a higher preference for longer chain lengths. Plays a role in influencing the retrograde trafficking of lysosomal sorting receptors SORT1 and IGF2R from the endosomes to the trans-Golgi network by controlling the recruitment of retromer complex to the endosomal membrane. Regulates the localization and activation of RAB7A which is required to recruit the retromer complex to the endosomal membrane.</text>
</comment>
<comment type="function">
    <text evidence="1">Exhibits palmitoyl protein thioesterase (S-depalmitoylation) activity in vitro and most likely plays a role in protein S-depalmitoylation.</text>
</comment>
<comment type="catalytic activity">
    <reaction evidence="1">
        <text>S-hexadecanoyl-L-cysteinyl-[protein] + H2O = L-cysteinyl-[protein] + hexadecanoate + H(+)</text>
        <dbReference type="Rhea" id="RHEA:19233"/>
        <dbReference type="Rhea" id="RHEA-COMP:10131"/>
        <dbReference type="Rhea" id="RHEA-COMP:11032"/>
        <dbReference type="ChEBI" id="CHEBI:7896"/>
        <dbReference type="ChEBI" id="CHEBI:15377"/>
        <dbReference type="ChEBI" id="CHEBI:15378"/>
        <dbReference type="ChEBI" id="CHEBI:29950"/>
        <dbReference type="ChEBI" id="CHEBI:74151"/>
        <dbReference type="EC" id="3.1.2.22"/>
    </reaction>
    <physiologicalReaction direction="left-to-right" evidence="1">
        <dbReference type="Rhea" id="RHEA:19234"/>
    </physiologicalReaction>
</comment>
<comment type="catalytic activity">
    <molecule>Bis(monoacylglycero)phosphate synthase CLN5, secreted form</molecule>
    <reaction evidence="1">
        <text>2 1-acyl-sn-glycero-3-phospho-(1'-sn-glycerol) = 1-acyl-sn-glycero-3-phospho-(3'-acyl-sn-1'-glycerol) + sn-glycero-3-phospho-(1'-sn-glycerol)</text>
        <dbReference type="Rhea" id="RHEA:77619"/>
        <dbReference type="ChEBI" id="CHEBI:64717"/>
        <dbReference type="ChEBI" id="CHEBI:64840"/>
        <dbReference type="ChEBI" id="CHEBI:232628"/>
    </reaction>
    <physiologicalReaction direction="left-to-right" evidence="1">
        <dbReference type="Rhea" id="RHEA:77620"/>
    </physiologicalReaction>
</comment>
<comment type="catalytic activity">
    <molecule>Bis(monoacylglycero)phosphate synthase CLN5, secreted form</molecule>
    <reaction evidence="1">
        <text>2 1-(9Z-octadecenoyl)-sn-glycero-3-phospho-(1'-sn-glycerol) = 1-(9Z-octadecenoyl)-sn-glycero-3-phospho-(3'-(9Z-octadecenoyl)-1'-sn-glycerol) + sn-glycero-3-phospho-(1'-sn-glycerol)</text>
        <dbReference type="Rhea" id="RHEA:77599"/>
        <dbReference type="ChEBI" id="CHEBI:64717"/>
        <dbReference type="ChEBI" id="CHEBI:72828"/>
        <dbReference type="ChEBI" id="CHEBI:232637"/>
    </reaction>
    <physiologicalReaction direction="left-to-right" evidence="1">
        <dbReference type="Rhea" id="RHEA:77600"/>
    </physiologicalReaction>
</comment>
<comment type="catalytic activity">
    <molecule>Bis(monoacylglycero)phosphate synthase CLN5, secreted form</molecule>
    <reaction evidence="1">
        <text>2 1-octadecanoyl-sn-glycero-3-phospho-(1'-sn-glycerol) = 1-octadecanoyl-sn-glycero-3-phospho-(3'-octadecanoyl-1'-sn-glycerol) + sn-glycero-3-phospho-(1'-sn-glycerol)</text>
        <dbReference type="Rhea" id="RHEA:77603"/>
        <dbReference type="ChEBI" id="CHEBI:64717"/>
        <dbReference type="ChEBI" id="CHEBI:72827"/>
        <dbReference type="ChEBI" id="CHEBI:232638"/>
    </reaction>
    <physiologicalReaction direction="left-to-right" evidence="1">
        <dbReference type="Rhea" id="RHEA:77604"/>
    </physiologicalReaction>
</comment>
<comment type="catalytic activity">
    <molecule>Bis(monoacylglycero)phosphate synthase CLN5, secreted form</molecule>
    <reaction evidence="1">
        <text>2 1-hexadecanoyl-sn-glycero-3-phospho-(1'-sn-glycerol) = 1-hexadecanoyl-sn-glycero-3-phospho-(3'-hexadecanoyl-1'-sn-glycerol) + sn-glycero-3-phospho-(1'-sn-glycerol)</text>
        <dbReference type="Rhea" id="RHEA:77607"/>
        <dbReference type="ChEBI" id="CHEBI:64717"/>
        <dbReference type="ChEBI" id="CHEBI:75158"/>
        <dbReference type="ChEBI" id="CHEBI:232639"/>
    </reaction>
    <physiologicalReaction direction="left-to-right" evidence="1">
        <dbReference type="Rhea" id="RHEA:77608"/>
    </physiologicalReaction>
</comment>
<comment type="catalytic activity">
    <molecule>Bis(monoacylglycero)phosphate synthase CLN5, secreted form</molecule>
    <reaction evidence="1">
        <text>2 1-tetradecanoyl-sn-glycero-3-phospho-(1'-sn-glycerol) = 1-tetradecanoyl-sn-glycero-3-phospho-(3'-tetradecanoyl-1'-sn-glycerol) + sn-glycero-3-phospho-(1'-sn-glycerol)</text>
        <dbReference type="Rhea" id="RHEA:77611"/>
        <dbReference type="ChEBI" id="CHEBI:64717"/>
        <dbReference type="ChEBI" id="CHEBI:72826"/>
        <dbReference type="ChEBI" id="CHEBI:232640"/>
    </reaction>
    <physiologicalReaction direction="left-to-right" evidence="1">
        <dbReference type="Rhea" id="RHEA:77612"/>
    </physiologicalReaction>
</comment>
<comment type="subunit">
    <text evidence="1 2">Multimer. Interacts with SORT1, RAB5A and RAB7A. Interacts with PPT1, TPP1, CLN3, CLN6, CLN8, ATP5F1A and ATP5F1B.</text>
</comment>
<comment type="subcellular location">
    <molecule>Bis(monoacylglycero)phosphate synthase CLN5, secreted form</molecule>
    <subcellularLocation>
        <location evidence="1">Lysosome</location>
    </subcellularLocation>
</comment>
<comment type="subcellular location">
    <molecule>Bis(monoacylglycero)phosphate synthase CLN5</molecule>
    <subcellularLocation>
        <location evidence="1">Membrane</location>
        <topology evidence="1">Single-pass type II membrane protein</topology>
    </subcellularLocation>
    <text evidence="1">An amphipathic anchor region facilitates its association with the membrane.</text>
</comment>
<comment type="PTM">
    <text evidence="1">N-glycosylated with both high mannose and complex type sugars. Glycosylation is important for proper folding and trafficking to the lysosomes.</text>
</comment>
<comment type="PTM">
    <molecule>Bis(monoacylglycero)phosphate synthase CLN5</molecule>
    <text evidence="1">The type II membrane signal anchor is proteolytically cleaved to produce a mature form that is transported to the lysosomes (Bis(monoacylglycero)phosphate synthase CLN5, secreted form).</text>
</comment>
<comment type="PTM">
    <text evidence="1">Can undergo proteolytic cleavage at the C-terminus, probably by a cysteine protease and may involve the removal of approximately 10-15 residues from the C-terminal end.</text>
</comment>
<comment type="disease">
    <text>Defects in CLN5 are the cause of neuronal ceroid lipofuscinosis (NCL). NCL is characterized by brain atrophy and the accumulation of lysosome derived fluorescent storage bodies in neurons and most other cells. NCL is found in Border collie dogs.</text>
</comment>
<comment type="similarity">
    <text evidence="4">Belongs to the CLN5 family.</text>
</comment>
<accession>Q5JZQ9</accession>
<accession>Q5D6C2</accession>
<feature type="chain" id="PRO_0000330470" description="Bis(monoacylglycero)phosphate synthase CLN5">
    <location>
        <begin position="1"/>
        <end position="350"/>
    </location>
</feature>
<feature type="chain" id="PRO_0000438008" description="Bis(monoacylglycero)phosphate synthase CLN5, secreted form">
    <location>
        <begin status="unknown"/>
        <end position="350"/>
    </location>
</feature>
<feature type="topological domain" description="Cytoplasmic" evidence="1">
    <location>
        <begin position="1"/>
        <end position="25"/>
    </location>
</feature>
<feature type="transmembrane region" description="Helical; Signal-anchor for type II membrane protein" evidence="3">
    <location>
        <begin position="26"/>
        <end position="42"/>
    </location>
</feature>
<feature type="topological domain" description="Lumenal" evidence="1">
    <location>
        <begin position="43"/>
        <end position="350"/>
    </location>
</feature>
<feature type="region of interest" description="Membrane-anchoring" evidence="1">
    <location>
        <begin position="296"/>
        <end position="335"/>
    </location>
</feature>
<feature type="active site" description="Proton acceptor" evidence="1">
    <location>
        <position position="109"/>
    </location>
</feature>
<feature type="active site" description="Nucleophile; Acyl-thioester intermediate" evidence="1">
    <location>
        <position position="223"/>
    </location>
</feature>
<feature type="glycosylation site" description="N-linked (GlcNAc...) asparagine" evidence="3">
    <location>
        <position position="122"/>
    </location>
</feature>
<feature type="glycosylation site" description="N-linked (GlcNAc...) asparagine" evidence="3">
    <location>
        <position position="135"/>
    </location>
</feature>
<feature type="glycosylation site" description="N-linked (GlcNAc...) asparagine" evidence="3">
    <location>
        <position position="170"/>
    </location>
</feature>
<feature type="glycosylation site" description="N-linked (GlcNAc...) asparagine" evidence="3">
    <location>
        <position position="195"/>
    </location>
</feature>
<feature type="glycosylation site" description="N-linked (GlcNAc...) asparagine" evidence="3">
    <location>
        <position position="247"/>
    </location>
</feature>
<feature type="glycosylation site" description="N-linked (GlcNAc...) asparagine" evidence="3">
    <location>
        <position position="263"/>
    </location>
</feature>
<feature type="glycosylation site" description="N-linked (GlcNAc...) asparagine" evidence="3">
    <location>
        <position position="273"/>
    </location>
</feature>
<feature type="glycosylation site" description="N-linked (GlcNAc...) asparagine" evidence="3">
    <location>
        <position position="344"/>
    </location>
</feature>
<feature type="disulfide bond" evidence="1">
    <location>
        <begin position="62"/>
        <end position="151"/>
    </location>
</feature>
<feature type="disulfide bond" evidence="1">
    <location>
        <begin position="69"/>
        <end position="157"/>
    </location>
</feature>
<protein>
    <recommendedName>
        <fullName evidence="1">Bis(monoacylglycero)phosphate synthase CLN5</fullName>
        <shortName>BMP synthase CLN5</shortName>
        <ecNumber evidence="1">2.3.1.-</ecNumber>
    </recommendedName>
    <alternativeName>
        <fullName>Ceroid-lipofuscinosis neuronal protein 5</fullName>
        <shortName>Protein CLN5</shortName>
    </alternativeName>
    <alternativeName>
        <fullName>Palmitoyl protein thioesterase CLN5</fullName>
        <ecNumber evidence="1">3.1.2.22</ecNumber>
    </alternativeName>
    <alternativeName>
        <fullName>S-depalmitoylase CLN5</fullName>
    </alternativeName>
    <component>
        <recommendedName>
            <fullName>Bis(monoacylglycero)phosphate synthase CLN5, secreted form</fullName>
        </recommendedName>
    </component>
</protein>
<organism>
    <name type="scientific">Canis lupus familiaris</name>
    <name type="common">Dog</name>
    <name type="synonym">Canis familiaris</name>
    <dbReference type="NCBI Taxonomy" id="9615"/>
    <lineage>
        <taxon>Eukaryota</taxon>
        <taxon>Metazoa</taxon>
        <taxon>Chordata</taxon>
        <taxon>Craniata</taxon>
        <taxon>Vertebrata</taxon>
        <taxon>Euteleostomi</taxon>
        <taxon>Mammalia</taxon>
        <taxon>Eutheria</taxon>
        <taxon>Laurasiatheria</taxon>
        <taxon>Carnivora</taxon>
        <taxon>Caniformia</taxon>
        <taxon>Canidae</taxon>
        <taxon>Canis</taxon>
    </lineage>
</organism>